<organism>
    <name type="scientific">Arabidopsis thaliana</name>
    <name type="common">Mouse-ear cress</name>
    <dbReference type="NCBI Taxonomy" id="3702"/>
    <lineage>
        <taxon>Eukaryota</taxon>
        <taxon>Viridiplantae</taxon>
        <taxon>Streptophyta</taxon>
        <taxon>Embryophyta</taxon>
        <taxon>Tracheophyta</taxon>
        <taxon>Spermatophyta</taxon>
        <taxon>Magnoliopsida</taxon>
        <taxon>eudicotyledons</taxon>
        <taxon>Gunneridae</taxon>
        <taxon>Pentapetalae</taxon>
        <taxon>rosids</taxon>
        <taxon>malvids</taxon>
        <taxon>Brassicales</taxon>
        <taxon>Brassicaceae</taxon>
        <taxon>Camelineae</taxon>
        <taxon>Arabidopsis</taxon>
    </lineage>
</organism>
<gene>
    <name type="primary">PDF1.3</name>
    <name type="ordered locus">At2g26010</name>
    <name type="ORF">T19L18.18</name>
</gene>
<proteinExistence type="evidence at transcript level"/>
<accession>O80995</accession>
<name>DEF14_ARATH</name>
<dbReference type="EMBL" id="AC004747">
    <property type="protein sequence ID" value="AAC31234.1"/>
    <property type="molecule type" value="Genomic_DNA"/>
</dbReference>
<dbReference type="EMBL" id="CP002685">
    <property type="protein sequence ID" value="AEC07783.1"/>
    <property type="molecule type" value="Genomic_DNA"/>
</dbReference>
<dbReference type="PIR" id="T02622">
    <property type="entry name" value="T02622"/>
</dbReference>
<dbReference type="RefSeq" id="NP_180171.1">
    <property type="nucleotide sequence ID" value="NM_128160.3"/>
</dbReference>
<dbReference type="SMR" id="O80995"/>
<dbReference type="BioGRID" id="2494">
    <property type="interactions" value="3"/>
</dbReference>
<dbReference type="IntAct" id="O80995">
    <property type="interactions" value="3"/>
</dbReference>
<dbReference type="STRING" id="3702.O80995"/>
<dbReference type="PaxDb" id="3702-AT2G26010.1"/>
<dbReference type="ProteomicsDB" id="224068"/>
<dbReference type="EnsemblPlants" id="AT2G26010.1">
    <property type="protein sequence ID" value="AT2G26010.1"/>
    <property type="gene ID" value="AT2G26010"/>
</dbReference>
<dbReference type="GeneID" id="817142"/>
<dbReference type="Gramene" id="AT2G26010.1">
    <property type="protein sequence ID" value="AT2G26010.1"/>
    <property type="gene ID" value="AT2G26010"/>
</dbReference>
<dbReference type="KEGG" id="ath:AT2G26010"/>
<dbReference type="Araport" id="AT2G26010"/>
<dbReference type="TAIR" id="AT2G26010">
    <property type="gene designation" value="PDF1.3"/>
</dbReference>
<dbReference type="eggNOG" id="ENOG502SQS4">
    <property type="taxonomic scope" value="Eukaryota"/>
</dbReference>
<dbReference type="HOGENOM" id="CLU_161668_3_0_1"/>
<dbReference type="InParanoid" id="O80995"/>
<dbReference type="OMA" id="RCICYFQ"/>
<dbReference type="OrthoDB" id="1851987at2759"/>
<dbReference type="PhylomeDB" id="O80995"/>
<dbReference type="PRO" id="PR:O80995"/>
<dbReference type="Proteomes" id="UP000006548">
    <property type="component" value="Chromosome 2"/>
</dbReference>
<dbReference type="ExpressionAtlas" id="O80995">
    <property type="expression patterns" value="baseline and differential"/>
</dbReference>
<dbReference type="GO" id="GO:0005576">
    <property type="term" value="C:extracellular region"/>
    <property type="evidence" value="ECO:0007669"/>
    <property type="project" value="UniProtKB-SubCell"/>
</dbReference>
<dbReference type="GO" id="GO:0099503">
    <property type="term" value="C:secretory vesicle"/>
    <property type="evidence" value="ECO:0007005"/>
    <property type="project" value="TAIR"/>
</dbReference>
<dbReference type="GO" id="GO:0006952">
    <property type="term" value="P:defense response"/>
    <property type="evidence" value="ECO:0000250"/>
    <property type="project" value="TAIR"/>
</dbReference>
<dbReference type="GO" id="GO:0050832">
    <property type="term" value="P:defense response to fungus"/>
    <property type="evidence" value="ECO:0007669"/>
    <property type="project" value="UniProtKB-KW"/>
</dbReference>
<dbReference type="GO" id="GO:0031640">
    <property type="term" value="P:killing of cells of another organism"/>
    <property type="evidence" value="ECO:0007669"/>
    <property type="project" value="UniProtKB-KW"/>
</dbReference>
<dbReference type="CDD" id="cd00107">
    <property type="entry name" value="Knot1"/>
    <property type="match status" value="1"/>
</dbReference>
<dbReference type="FunFam" id="3.30.30.10:FF:000003">
    <property type="entry name" value="Defensin-like protein 1"/>
    <property type="match status" value="1"/>
</dbReference>
<dbReference type="Gene3D" id="3.30.30.10">
    <property type="entry name" value="Knottin, scorpion toxin-like"/>
    <property type="match status" value="1"/>
</dbReference>
<dbReference type="InterPro" id="IPR008176">
    <property type="entry name" value="Defensin_plant"/>
</dbReference>
<dbReference type="InterPro" id="IPR003614">
    <property type="entry name" value="Scorpion_toxin-like"/>
</dbReference>
<dbReference type="InterPro" id="IPR036574">
    <property type="entry name" value="Scorpion_toxin-like_sf"/>
</dbReference>
<dbReference type="PANTHER" id="PTHR33147">
    <property type="entry name" value="DEFENSIN-LIKE PROTEIN 1"/>
    <property type="match status" value="1"/>
</dbReference>
<dbReference type="PANTHER" id="PTHR33147:SF37">
    <property type="entry name" value="DEFENSIN-LIKE PROTEIN 14-RELATED"/>
    <property type="match status" value="1"/>
</dbReference>
<dbReference type="Pfam" id="PF00304">
    <property type="entry name" value="Gamma-thionin"/>
    <property type="match status" value="1"/>
</dbReference>
<dbReference type="SMART" id="SM00505">
    <property type="entry name" value="Knot1"/>
    <property type="match status" value="1"/>
</dbReference>
<dbReference type="SUPFAM" id="SSF57095">
    <property type="entry name" value="Scorpion toxin-like"/>
    <property type="match status" value="1"/>
</dbReference>
<dbReference type="PROSITE" id="PS00940">
    <property type="entry name" value="GAMMA_THIONIN"/>
    <property type="match status" value="1"/>
</dbReference>
<feature type="signal peptide" evidence="1">
    <location>
        <begin position="1"/>
        <end position="29"/>
    </location>
</feature>
<feature type="chain" id="PRO_0000007020" description="Defensin-like protein 14">
    <location>
        <begin position="30"/>
        <end position="80"/>
    </location>
</feature>
<feature type="modified residue" description="Pyrrolidone carboxylic acid" evidence="2">
    <location>
        <position position="30"/>
    </location>
</feature>
<feature type="disulfide bond" evidence="1">
    <location>
        <begin position="33"/>
        <end position="80"/>
    </location>
</feature>
<feature type="disulfide bond" evidence="1">
    <location>
        <begin position="44"/>
        <end position="65"/>
    </location>
</feature>
<feature type="disulfide bond" evidence="1">
    <location>
        <begin position="50"/>
        <end position="74"/>
    </location>
</feature>
<feature type="disulfide bond" evidence="1">
    <location>
        <begin position="54"/>
        <end position="76"/>
    </location>
</feature>
<keyword id="KW-0929">Antimicrobial</keyword>
<keyword id="KW-1015">Disulfide bond</keyword>
<keyword id="KW-0295">Fungicide</keyword>
<keyword id="KW-0611">Plant defense</keyword>
<keyword id="KW-0873">Pyrrolidone carboxylic acid</keyword>
<keyword id="KW-1185">Reference proteome</keyword>
<keyword id="KW-0964">Secreted</keyword>
<keyword id="KW-0732">Signal</keyword>
<evidence type="ECO:0000250" key="1"/>
<evidence type="ECO:0000250" key="2">
    <source>
        <dbReference type="UniProtKB" id="P30224"/>
    </source>
</evidence>
<evidence type="ECO:0000269" key="3">
    <source>
    </source>
</evidence>
<evidence type="ECO:0000305" key="4"/>
<reference key="1">
    <citation type="journal article" date="1999" name="Nature">
        <title>Sequence and analysis of chromosome 2 of the plant Arabidopsis thaliana.</title>
        <authorList>
            <person name="Lin X."/>
            <person name="Kaul S."/>
            <person name="Rounsley S.D."/>
            <person name="Shea T.P."/>
            <person name="Benito M.-I."/>
            <person name="Town C.D."/>
            <person name="Fujii C.Y."/>
            <person name="Mason T.M."/>
            <person name="Bowman C.L."/>
            <person name="Barnstead M.E."/>
            <person name="Feldblyum T.V."/>
            <person name="Buell C.R."/>
            <person name="Ketchum K.A."/>
            <person name="Lee J.J."/>
            <person name="Ronning C.M."/>
            <person name="Koo H.L."/>
            <person name="Moffat K.S."/>
            <person name="Cronin L.A."/>
            <person name="Shen M."/>
            <person name="Pai G."/>
            <person name="Van Aken S."/>
            <person name="Umayam L."/>
            <person name="Tallon L.J."/>
            <person name="Gill J.E."/>
            <person name="Adams M.D."/>
            <person name="Carrera A.J."/>
            <person name="Creasy T.H."/>
            <person name="Goodman H.M."/>
            <person name="Somerville C.R."/>
            <person name="Copenhaver G.P."/>
            <person name="Preuss D."/>
            <person name="Nierman W.C."/>
            <person name="White O."/>
            <person name="Eisen J.A."/>
            <person name="Salzberg S.L."/>
            <person name="Fraser C.M."/>
            <person name="Venter J.C."/>
        </authorList>
    </citation>
    <scope>NUCLEOTIDE SEQUENCE [LARGE SCALE GENOMIC DNA]</scope>
    <source>
        <strain>cv. Columbia</strain>
    </source>
</reference>
<reference key="2">
    <citation type="journal article" date="2017" name="Plant J.">
        <title>Araport11: a complete reannotation of the Arabidopsis thaliana reference genome.</title>
        <authorList>
            <person name="Cheng C.Y."/>
            <person name="Krishnakumar V."/>
            <person name="Chan A.P."/>
            <person name="Thibaud-Nissen F."/>
            <person name="Schobel S."/>
            <person name="Town C.D."/>
        </authorList>
    </citation>
    <scope>GENOME REANNOTATION</scope>
    <source>
        <strain>cv. Columbia</strain>
    </source>
</reference>
<reference key="3">
    <citation type="journal article" date="2002" name="Planta">
        <title>Plant defensins.</title>
        <authorList>
            <person name="Thomma B.P.H.J."/>
            <person name="Cammue B.P."/>
            <person name="Thevissen K."/>
        </authorList>
    </citation>
    <scope>GENE FAMILY</scope>
    <scope>NOMENCLATURE</scope>
</reference>
<reference key="4">
    <citation type="journal article" date="2005" name="Plant Physiol.">
        <title>Genome organization of more than 300 defensin-like genes in Arabidopsis.</title>
        <authorList>
            <person name="Silverstein K.A.T."/>
            <person name="Graham M.A."/>
            <person name="Paape T.D."/>
            <person name="VandenBosch K.A."/>
        </authorList>
    </citation>
    <scope>GENE FAMILY</scope>
</reference>
<reference key="5">
    <citation type="journal article" date="2007" name="Transgenic Res.">
        <title>Use of a PTGS-MAR expression system for efficient in planta production of bioactive Arabidopsis thaliana plant defensins.</title>
        <authorList>
            <person name="Sels J."/>
            <person name="Delaure S.L."/>
            <person name="Aerts A.M."/>
            <person name="Proost P."/>
            <person name="Cammue B.P.A."/>
            <person name="De Bolle M.F.C."/>
        </authorList>
    </citation>
    <scope>FUNCTION</scope>
</reference>
<comment type="function">
    <text evidence="3">Confers broad-spectrum resistance to pathogens. Has antifungal activity in vitro.</text>
</comment>
<comment type="interaction">
    <interactant intactId="EBI-25522494">
        <id>O80995</id>
    </interactant>
    <interactant intactId="EBI-25522702">
        <id>A4FVP6</id>
        <label>NAC016</label>
    </interactant>
    <organismsDiffer>false</organismsDiffer>
    <experiments>3</experiments>
</comment>
<comment type="interaction">
    <interactant intactId="EBI-25522494">
        <id>O80995</id>
    </interactant>
    <interactant intactId="EBI-2319707">
        <id>Q94F58</id>
        <label>NAC089</label>
    </interactant>
    <organismsDiffer>false</organismsDiffer>
    <experiments>3</experiments>
</comment>
<comment type="interaction">
    <interactant intactId="EBI-25522494">
        <id>O80995</id>
    </interactant>
    <interactant intactId="EBI-4426607">
        <id>F4JN35</id>
        <label>NTL9</label>
    </interactant>
    <organismsDiffer>false</organismsDiffer>
    <experiments>3</experiments>
</comment>
<comment type="subcellular location">
    <subcellularLocation>
        <location evidence="1">Secreted</location>
    </subcellularLocation>
</comment>
<comment type="similarity">
    <text evidence="4">Belongs to the DEFL family.</text>
</comment>
<sequence length="80" mass="8580">MAKSAAIITFLFAALVLFAAFEAPIMVEAQKLCEKPSGTWSGVCGNSNACKNQCINLEGAKHGSCNYVFPAHKCICYFPC</sequence>
<protein>
    <recommendedName>
        <fullName>Defensin-like protein 14</fullName>
    </recommendedName>
    <alternativeName>
        <fullName>Cysteine-rich antifungal protein At2g26010</fullName>
    </alternativeName>
    <alternativeName>
        <fullName>Plant defensin 1.3</fullName>
    </alternativeName>
</protein>